<reference key="1">
    <citation type="journal article" date="2010" name="BMC Genomics">
        <title>Complete genome sequence and lifestyle of black-pigmented Corynebacterium aurimucosum ATCC 700975 (formerly C. nigricans CN-1) isolated from a vaginal swab of a woman with spontaneous abortion.</title>
        <authorList>
            <person name="Trost E."/>
            <person name="Gotker S."/>
            <person name="Schneider J."/>
            <person name="Schneiker-Bekel S."/>
            <person name="Szczepanowski R."/>
            <person name="Tilker A."/>
            <person name="Viehoever P."/>
            <person name="Arnold W."/>
            <person name="Bekel T."/>
            <person name="Blom J."/>
            <person name="Gartemann K.H."/>
            <person name="Linke B."/>
            <person name="Goesmann A."/>
            <person name="Puhler A."/>
            <person name="Shukla S.K."/>
            <person name="Tauch A."/>
        </authorList>
    </citation>
    <scope>NUCLEOTIDE SEQUENCE [LARGE SCALE GENOMIC DNA]</scope>
    <source>
        <strain>ATCC 700975 / DSM 44827 / CIP 107346 / CN-1</strain>
    </source>
</reference>
<comment type="catalytic activity">
    <reaction evidence="1">
        <text>(S)-4-amino-5-oxopentanoate = 5-aminolevulinate</text>
        <dbReference type="Rhea" id="RHEA:14265"/>
        <dbReference type="ChEBI" id="CHEBI:57501"/>
        <dbReference type="ChEBI" id="CHEBI:356416"/>
        <dbReference type="EC" id="5.4.3.8"/>
    </reaction>
</comment>
<comment type="cofactor">
    <cofactor evidence="1">
        <name>pyridoxal 5'-phosphate</name>
        <dbReference type="ChEBI" id="CHEBI:597326"/>
    </cofactor>
</comment>
<comment type="pathway">
    <text evidence="1">Porphyrin-containing compound metabolism; protoporphyrin-IX biosynthesis; 5-aminolevulinate from L-glutamyl-tRNA(Glu): step 2/2.</text>
</comment>
<comment type="subunit">
    <text evidence="1">Homodimer.</text>
</comment>
<comment type="subcellular location">
    <subcellularLocation>
        <location evidence="1">Cytoplasm</location>
    </subcellularLocation>
</comment>
<comment type="similarity">
    <text evidence="1">Belongs to the class-III pyridoxal-phosphate-dependent aminotransferase family. HemL subfamily.</text>
</comment>
<name>GSA_CORA7</name>
<keyword id="KW-0963">Cytoplasm</keyword>
<keyword id="KW-0413">Isomerase</keyword>
<keyword id="KW-0627">Porphyrin biosynthesis</keyword>
<keyword id="KW-0663">Pyridoxal phosphate</keyword>
<keyword id="KW-1185">Reference proteome</keyword>
<protein>
    <recommendedName>
        <fullName evidence="1">Glutamate-1-semialdehyde 2,1-aminomutase</fullName>
        <shortName evidence="1">GSA</shortName>
        <ecNumber evidence="1">5.4.3.8</ecNumber>
    </recommendedName>
    <alternativeName>
        <fullName evidence="1">Glutamate-1-semialdehyde aminotransferase</fullName>
        <shortName evidence="1">GSA-AT</shortName>
    </alternativeName>
</protein>
<proteinExistence type="inferred from homology"/>
<evidence type="ECO:0000255" key="1">
    <source>
        <dbReference type="HAMAP-Rule" id="MF_00375"/>
    </source>
</evidence>
<sequence length="444" mass="46277">MWAMPNSSQLNQQNTSQSAEWFERATKVTPGGVNSPVRAFGSVGGQARVIARGEGSRLWDIDGNEYVDLVSSYGPMIHGNAHPAIVEAVQKAAADGLSFGAPTEGETLLAEHIVKRTAVEQVRLVNSGTEATMSAVRLARGFTGRAKVLKFEGCYHGHVDALLASAGSGVATFALPDSPGVTGASAADTIVVPYNDLDAVREAFAAHPGEIACIIAEAAAGNMGTVAPEEGFNAALKEIAHADGALLILDEVMTGFRTSYKGWFGVDGVAGDLVTFGKVVSGGLPAAAFGGRADVMASLAPSGPVYQAGTLSGNPVAMASGLASLELANAELYPRLQDNADRLTGLITEALSAAGVEHYIQRAETMFSIRFAEGQGRNFADMQAADTWRFAPFFHALLEGGVYVPPSAFETWFVSDALTDNDFEVIEAALKPAAQAAASAQRPQ</sequence>
<accession>C3PKI4</accession>
<feature type="chain" id="PRO_1000201015" description="Glutamate-1-semialdehyde 2,1-aminomutase">
    <location>
        <begin position="1"/>
        <end position="444"/>
    </location>
</feature>
<feature type="modified residue" description="N6-(pyridoxal phosphate)lysine" evidence="1">
    <location>
        <position position="278"/>
    </location>
</feature>
<dbReference type="EC" id="5.4.3.8" evidence="1"/>
<dbReference type="EMBL" id="CP001601">
    <property type="protein sequence ID" value="ACP31920.1"/>
    <property type="molecule type" value="Genomic_DNA"/>
</dbReference>
<dbReference type="RefSeq" id="WP_012714810.1">
    <property type="nucleotide sequence ID" value="NC_012590.1"/>
</dbReference>
<dbReference type="SMR" id="C3PKI4"/>
<dbReference type="STRING" id="548476.cauri_0321"/>
<dbReference type="GeneID" id="31922938"/>
<dbReference type="KEGG" id="car:cauri_0321"/>
<dbReference type="eggNOG" id="COG0001">
    <property type="taxonomic scope" value="Bacteria"/>
</dbReference>
<dbReference type="HOGENOM" id="CLU_016922_1_5_11"/>
<dbReference type="OrthoDB" id="9801052at2"/>
<dbReference type="UniPathway" id="UPA00251">
    <property type="reaction ID" value="UER00317"/>
</dbReference>
<dbReference type="Proteomes" id="UP000002077">
    <property type="component" value="Chromosome"/>
</dbReference>
<dbReference type="GO" id="GO:0005737">
    <property type="term" value="C:cytoplasm"/>
    <property type="evidence" value="ECO:0007669"/>
    <property type="project" value="UniProtKB-SubCell"/>
</dbReference>
<dbReference type="GO" id="GO:0042286">
    <property type="term" value="F:glutamate-1-semialdehyde 2,1-aminomutase activity"/>
    <property type="evidence" value="ECO:0007669"/>
    <property type="project" value="UniProtKB-UniRule"/>
</dbReference>
<dbReference type="GO" id="GO:0030170">
    <property type="term" value="F:pyridoxal phosphate binding"/>
    <property type="evidence" value="ECO:0007669"/>
    <property type="project" value="InterPro"/>
</dbReference>
<dbReference type="GO" id="GO:0008483">
    <property type="term" value="F:transaminase activity"/>
    <property type="evidence" value="ECO:0007669"/>
    <property type="project" value="InterPro"/>
</dbReference>
<dbReference type="GO" id="GO:0006782">
    <property type="term" value="P:protoporphyrinogen IX biosynthetic process"/>
    <property type="evidence" value="ECO:0007669"/>
    <property type="project" value="UniProtKB-UniRule"/>
</dbReference>
<dbReference type="CDD" id="cd00610">
    <property type="entry name" value="OAT_like"/>
    <property type="match status" value="1"/>
</dbReference>
<dbReference type="FunFam" id="3.40.640.10:FF:000021">
    <property type="entry name" value="Glutamate-1-semialdehyde 2,1-aminomutase"/>
    <property type="match status" value="1"/>
</dbReference>
<dbReference type="Gene3D" id="3.90.1150.10">
    <property type="entry name" value="Aspartate Aminotransferase, domain 1"/>
    <property type="match status" value="1"/>
</dbReference>
<dbReference type="Gene3D" id="3.40.640.10">
    <property type="entry name" value="Type I PLP-dependent aspartate aminotransferase-like (Major domain)"/>
    <property type="match status" value="1"/>
</dbReference>
<dbReference type="HAMAP" id="MF_00375">
    <property type="entry name" value="HemL_aminotrans_3"/>
    <property type="match status" value="1"/>
</dbReference>
<dbReference type="InterPro" id="IPR004639">
    <property type="entry name" value="4pyrrol_synth_GluAld_NH2Trfase"/>
</dbReference>
<dbReference type="InterPro" id="IPR005814">
    <property type="entry name" value="Aminotrans_3"/>
</dbReference>
<dbReference type="InterPro" id="IPR049704">
    <property type="entry name" value="Aminotrans_3_PPA_site"/>
</dbReference>
<dbReference type="InterPro" id="IPR015424">
    <property type="entry name" value="PyrdxlP-dep_Trfase"/>
</dbReference>
<dbReference type="InterPro" id="IPR015421">
    <property type="entry name" value="PyrdxlP-dep_Trfase_major"/>
</dbReference>
<dbReference type="InterPro" id="IPR015422">
    <property type="entry name" value="PyrdxlP-dep_Trfase_small"/>
</dbReference>
<dbReference type="NCBIfam" id="TIGR00713">
    <property type="entry name" value="hemL"/>
    <property type="match status" value="1"/>
</dbReference>
<dbReference type="NCBIfam" id="NF000818">
    <property type="entry name" value="PRK00062.1"/>
    <property type="match status" value="1"/>
</dbReference>
<dbReference type="PANTHER" id="PTHR43713">
    <property type="entry name" value="GLUTAMATE-1-SEMIALDEHYDE 2,1-AMINOMUTASE"/>
    <property type="match status" value="1"/>
</dbReference>
<dbReference type="PANTHER" id="PTHR43713:SF3">
    <property type="entry name" value="GLUTAMATE-1-SEMIALDEHYDE 2,1-AMINOMUTASE 1, CHLOROPLASTIC-RELATED"/>
    <property type="match status" value="1"/>
</dbReference>
<dbReference type="Pfam" id="PF00202">
    <property type="entry name" value="Aminotran_3"/>
    <property type="match status" value="1"/>
</dbReference>
<dbReference type="SUPFAM" id="SSF53383">
    <property type="entry name" value="PLP-dependent transferases"/>
    <property type="match status" value="1"/>
</dbReference>
<dbReference type="PROSITE" id="PS00600">
    <property type="entry name" value="AA_TRANSFER_CLASS_3"/>
    <property type="match status" value="1"/>
</dbReference>
<organism>
    <name type="scientific">Corynebacterium aurimucosum (strain ATCC 700975 / DSM 44827 / CIP 107346 / CN-1)</name>
    <name type="common">Corynebacterium nigricans</name>
    <dbReference type="NCBI Taxonomy" id="548476"/>
    <lineage>
        <taxon>Bacteria</taxon>
        <taxon>Bacillati</taxon>
        <taxon>Actinomycetota</taxon>
        <taxon>Actinomycetes</taxon>
        <taxon>Mycobacteriales</taxon>
        <taxon>Corynebacteriaceae</taxon>
        <taxon>Corynebacterium</taxon>
    </lineage>
</organism>
<gene>
    <name evidence="1" type="primary">hemL</name>
    <name type="ordered locus">cauri_0321</name>
</gene>